<keyword id="KW-0496">Mitochondrion</keyword>
<keyword id="KW-0648">Protein biosynthesis</keyword>
<keyword id="KW-1185">Reference proteome</keyword>
<keyword id="KW-0677">Repeat</keyword>
<keyword id="KW-0678">Repressor</keyword>
<keyword id="KW-0809">Transit peptide</keyword>
<keyword id="KW-0810">Translation regulation</keyword>
<proteinExistence type="predicted"/>
<evidence type="ECO:0000255" key="1"/>
<evidence type="ECO:0000256" key="2">
    <source>
        <dbReference type="SAM" id="MobiDB-lite"/>
    </source>
</evidence>
<evidence type="ECO:0000269" key="3">
    <source>
    </source>
</evidence>
<evidence type="ECO:0000269" key="4">
    <source>
    </source>
</evidence>
<name>PPR5_SCHPO</name>
<protein>
    <recommendedName>
        <fullName>Pentatricopeptide repeat-containing protein 5, mitochondrial</fullName>
    </recommendedName>
</protein>
<gene>
    <name type="primary">ppr5</name>
    <name type="ORF">SPAC1093.01</name>
    <name type="ORF">SPAC12B10.18</name>
</gene>
<comment type="function">
    <text evidence="4">Mitochondrial RNA-binding protein that acts as a general negative regulator of mitochondrial translation.</text>
</comment>
<comment type="subcellular location">
    <subcellularLocation>
        <location evidence="3 4">Mitochondrion</location>
    </subcellularLocation>
</comment>
<comment type="disruption phenotype">
    <text evidence="4">Seems to stimulate mitochondrial biogenesis and especially mitochondrial protein synthesis.</text>
</comment>
<reference key="1">
    <citation type="journal article" date="2002" name="Nature">
        <title>The genome sequence of Schizosaccharomyces pombe.</title>
        <authorList>
            <person name="Wood V."/>
            <person name="Gwilliam R."/>
            <person name="Rajandream M.A."/>
            <person name="Lyne M.H."/>
            <person name="Lyne R."/>
            <person name="Stewart A."/>
            <person name="Sgouros J.G."/>
            <person name="Peat N."/>
            <person name="Hayles J."/>
            <person name="Baker S.G."/>
            <person name="Basham D."/>
            <person name="Bowman S."/>
            <person name="Brooks K."/>
            <person name="Brown D."/>
            <person name="Brown S."/>
            <person name="Chillingworth T."/>
            <person name="Churcher C.M."/>
            <person name="Collins M."/>
            <person name="Connor R."/>
            <person name="Cronin A."/>
            <person name="Davis P."/>
            <person name="Feltwell T."/>
            <person name="Fraser A."/>
            <person name="Gentles S."/>
            <person name="Goble A."/>
            <person name="Hamlin N."/>
            <person name="Harris D.E."/>
            <person name="Hidalgo J."/>
            <person name="Hodgson G."/>
            <person name="Holroyd S."/>
            <person name="Hornsby T."/>
            <person name="Howarth S."/>
            <person name="Huckle E.J."/>
            <person name="Hunt S."/>
            <person name="Jagels K."/>
            <person name="James K.D."/>
            <person name="Jones L."/>
            <person name="Jones M."/>
            <person name="Leather S."/>
            <person name="McDonald S."/>
            <person name="McLean J."/>
            <person name="Mooney P."/>
            <person name="Moule S."/>
            <person name="Mungall K.L."/>
            <person name="Murphy L.D."/>
            <person name="Niblett D."/>
            <person name="Odell C."/>
            <person name="Oliver K."/>
            <person name="O'Neil S."/>
            <person name="Pearson D."/>
            <person name="Quail M.A."/>
            <person name="Rabbinowitsch E."/>
            <person name="Rutherford K.M."/>
            <person name="Rutter S."/>
            <person name="Saunders D."/>
            <person name="Seeger K."/>
            <person name="Sharp S."/>
            <person name="Skelton J."/>
            <person name="Simmonds M.N."/>
            <person name="Squares R."/>
            <person name="Squares S."/>
            <person name="Stevens K."/>
            <person name="Taylor K."/>
            <person name="Taylor R.G."/>
            <person name="Tivey A."/>
            <person name="Walsh S.V."/>
            <person name="Warren T."/>
            <person name="Whitehead S."/>
            <person name="Woodward J.R."/>
            <person name="Volckaert G."/>
            <person name="Aert R."/>
            <person name="Robben J."/>
            <person name="Grymonprez B."/>
            <person name="Weltjens I."/>
            <person name="Vanstreels E."/>
            <person name="Rieger M."/>
            <person name="Schaefer M."/>
            <person name="Mueller-Auer S."/>
            <person name="Gabel C."/>
            <person name="Fuchs M."/>
            <person name="Duesterhoeft A."/>
            <person name="Fritzc C."/>
            <person name="Holzer E."/>
            <person name="Moestl D."/>
            <person name="Hilbert H."/>
            <person name="Borzym K."/>
            <person name="Langer I."/>
            <person name="Beck A."/>
            <person name="Lehrach H."/>
            <person name="Reinhardt R."/>
            <person name="Pohl T.M."/>
            <person name="Eger P."/>
            <person name="Zimmermann W."/>
            <person name="Wedler H."/>
            <person name="Wambutt R."/>
            <person name="Purnelle B."/>
            <person name="Goffeau A."/>
            <person name="Cadieu E."/>
            <person name="Dreano S."/>
            <person name="Gloux S."/>
            <person name="Lelaure V."/>
            <person name="Mottier S."/>
            <person name="Galibert F."/>
            <person name="Aves S.J."/>
            <person name="Xiang Z."/>
            <person name="Hunt C."/>
            <person name="Moore K."/>
            <person name="Hurst S.M."/>
            <person name="Lucas M."/>
            <person name="Rochet M."/>
            <person name="Gaillardin C."/>
            <person name="Tallada V.A."/>
            <person name="Garzon A."/>
            <person name="Thode G."/>
            <person name="Daga R.R."/>
            <person name="Cruzado L."/>
            <person name="Jimenez J."/>
            <person name="Sanchez M."/>
            <person name="del Rey F."/>
            <person name="Benito J."/>
            <person name="Dominguez A."/>
            <person name="Revuelta J.L."/>
            <person name="Moreno S."/>
            <person name="Armstrong J."/>
            <person name="Forsburg S.L."/>
            <person name="Cerutti L."/>
            <person name="Lowe T."/>
            <person name="McCombie W.R."/>
            <person name="Paulsen I."/>
            <person name="Potashkin J."/>
            <person name="Shpakovski G.V."/>
            <person name="Ussery D."/>
            <person name="Barrell B.G."/>
            <person name="Nurse P."/>
        </authorList>
    </citation>
    <scope>NUCLEOTIDE SEQUENCE [LARGE SCALE GENOMIC DNA]</scope>
    <source>
        <strain>972 / ATCC 24843</strain>
    </source>
</reference>
<reference key="2">
    <citation type="journal article" date="2006" name="Nat. Biotechnol.">
        <title>ORFeome cloning and global analysis of protein localization in the fission yeast Schizosaccharomyces pombe.</title>
        <authorList>
            <person name="Matsuyama A."/>
            <person name="Arai R."/>
            <person name="Yashiroda Y."/>
            <person name="Shirai A."/>
            <person name="Kamata A."/>
            <person name="Sekido S."/>
            <person name="Kobayashi Y."/>
            <person name="Hashimoto A."/>
            <person name="Hamamoto M."/>
            <person name="Hiraoka Y."/>
            <person name="Horinouchi S."/>
            <person name="Yoshida M."/>
        </authorList>
    </citation>
    <scope>SUBCELLULAR LOCATION [LARGE SCALE ANALYSIS]</scope>
</reference>
<reference key="3">
    <citation type="journal article" date="2011" name="Nucleic Acids Res.">
        <title>A genome wide study in fission yeast reveals nine PPR proteins that regulate mitochondrial gene expression.</title>
        <authorList>
            <person name="Kuhl I."/>
            <person name="Dujeancourt L."/>
            <person name="Gaisne M."/>
            <person name="Herbert C.J."/>
            <person name="Bonnefoy N."/>
        </authorList>
    </citation>
    <scope>DOMAIN</scope>
    <scope>SUBCELLULAR LOCATION</scope>
    <scope>DISRUPTION PHENOTYPE</scope>
    <scope>FUNCTION</scope>
</reference>
<organism>
    <name type="scientific">Schizosaccharomyces pombe (strain 972 / ATCC 24843)</name>
    <name type="common">Fission yeast</name>
    <dbReference type="NCBI Taxonomy" id="284812"/>
    <lineage>
        <taxon>Eukaryota</taxon>
        <taxon>Fungi</taxon>
        <taxon>Dikarya</taxon>
        <taxon>Ascomycota</taxon>
        <taxon>Taphrinomycotina</taxon>
        <taxon>Schizosaccharomycetes</taxon>
        <taxon>Schizosaccharomycetales</taxon>
        <taxon>Schizosaccharomycetaceae</taxon>
        <taxon>Schizosaccharomyces</taxon>
    </lineage>
</organism>
<accession>Q10451</accession>
<accession>Q9UTQ2</accession>
<dbReference type="EMBL" id="CU329670">
    <property type="protein sequence ID" value="CAA94707.2"/>
    <property type="molecule type" value="Genomic_DNA"/>
</dbReference>
<dbReference type="PIR" id="T50065">
    <property type="entry name" value="T50065"/>
</dbReference>
<dbReference type="RefSeq" id="NP_594649.2">
    <property type="nucleotide sequence ID" value="NM_001020077.2"/>
</dbReference>
<dbReference type="BioGRID" id="279362">
    <property type="interactions" value="47"/>
</dbReference>
<dbReference type="FunCoup" id="Q10451">
    <property type="interactions" value="200"/>
</dbReference>
<dbReference type="STRING" id="284812.Q10451"/>
<dbReference type="PaxDb" id="4896-SPAC1093.01.1"/>
<dbReference type="EnsemblFungi" id="SPAC1093.01.1">
    <property type="protein sequence ID" value="SPAC1093.01.1:pep"/>
    <property type="gene ID" value="SPAC1093.01"/>
</dbReference>
<dbReference type="GeneID" id="2542921"/>
<dbReference type="KEGG" id="spo:2542921"/>
<dbReference type="PomBase" id="SPAC1093.01">
    <property type="gene designation" value="ppr5"/>
</dbReference>
<dbReference type="VEuPathDB" id="FungiDB:SPAC1093.01"/>
<dbReference type="eggNOG" id="KOG4197">
    <property type="taxonomic scope" value="Eukaryota"/>
</dbReference>
<dbReference type="HOGENOM" id="CLU_002863_0_0_1"/>
<dbReference type="InParanoid" id="Q10451"/>
<dbReference type="OMA" id="IQFEVQT"/>
<dbReference type="PhylomeDB" id="Q10451"/>
<dbReference type="PRO" id="PR:Q10451"/>
<dbReference type="Proteomes" id="UP000002485">
    <property type="component" value="Chromosome I"/>
</dbReference>
<dbReference type="GO" id="GO:0005737">
    <property type="term" value="C:cytoplasm"/>
    <property type="evidence" value="ECO:0007005"/>
    <property type="project" value="PomBase"/>
</dbReference>
<dbReference type="GO" id="GO:0005759">
    <property type="term" value="C:mitochondrial matrix"/>
    <property type="evidence" value="ECO:0000305"/>
    <property type="project" value="PomBase"/>
</dbReference>
<dbReference type="GO" id="GO:0005739">
    <property type="term" value="C:mitochondrion"/>
    <property type="evidence" value="ECO:0000314"/>
    <property type="project" value="PomBase"/>
</dbReference>
<dbReference type="GO" id="GO:0003729">
    <property type="term" value="F:mRNA binding"/>
    <property type="evidence" value="ECO:0000318"/>
    <property type="project" value="GO_Central"/>
</dbReference>
<dbReference type="GO" id="GO:0140053">
    <property type="term" value="P:mitochondrial gene expression"/>
    <property type="evidence" value="ECO:0000318"/>
    <property type="project" value="GO_Central"/>
</dbReference>
<dbReference type="GO" id="GO:0006417">
    <property type="term" value="P:regulation of translation"/>
    <property type="evidence" value="ECO:0007669"/>
    <property type="project" value="UniProtKB-KW"/>
</dbReference>
<dbReference type="GO" id="GO:0006412">
    <property type="term" value="P:translation"/>
    <property type="evidence" value="ECO:0007669"/>
    <property type="project" value="UniProtKB-KW"/>
</dbReference>
<dbReference type="Gene3D" id="1.25.40.10">
    <property type="entry name" value="Tetratricopeptide repeat domain"/>
    <property type="match status" value="2"/>
</dbReference>
<dbReference type="InterPro" id="IPR002885">
    <property type="entry name" value="Pentatricopeptide_rpt"/>
</dbReference>
<dbReference type="InterPro" id="IPR011990">
    <property type="entry name" value="TPR-like_helical_dom_sf"/>
</dbReference>
<dbReference type="NCBIfam" id="TIGR00756">
    <property type="entry name" value="PPR"/>
    <property type="match status" value="3"/>
</dbReference>
<dbReference type="PANTHER" id="PTHR47938:SF1">
    <property type="entry name" value="OS02G0304800 PROTEIN"/>
    <property type="match status" value="1"/>
</dbReference>
<dbReference type="PANTHER" id="PTHR47938">
    <property type="entry name" value="RESPIRATORY COMPLEX I CHAPERONE (CIA84), PUTATIVE (AFU_ORTHOLOGUE AFUA_2G06020)-RELATED"/>
    <property type="match status" value="1"/>
</dbReference>
<dbReference type="Pfam" id="PF01535">
    <property type="entry name" value="PPR"/>
    <property type="match status" value="2"/>
</dbReference>
<dbReference type="Pfam" id="PF13041">
    <property type="entry name" value="PPR_2"/>
    <property type="match status" value="1"/>
</dbReference>
<dbReference type="PROSITE" id="PS51375">
    <property type="entry name" value="PPR"/>
    <property type="match status" value="11"/>
</dbReference>
<feature type="transit peptide" description="Mitochondrion" evidence="1">
    <location>
        <begin position="1"/>
        <end status="unknown"/>
    </location>
</feature>
<feature type="chain" id="PRO_0000116844" description="Pentatricopeptide repeat-containing protein 5, mitochondrial">
    <location>
        <begin status="unknown"/>
        <end position="1261"/>
    </location>
</feature>
<feature type="repeat" description="PPR 1">
    <location>
        <begin position="365"/>
        <end position="404"/>
    </location>
</feature>
<feature type="repeat" description="PPR 2">
    <location>
        <begin position="405"/>
        <end position="442"/>
    </location>
</feature>
<feature type="repeat" description="PPR 3">
    <location>
        <begin position="443"/>
        <end position="479"/>
    </location>
</feature>
<feature type="repeat" description="PPR 4">
    <location>
        <begin position="480"/>
        <end position="514"/>
    </location>
</feature>
<feature type="repeat" description="PPR 5">
    <location>
        <begin position="550"/>
        <end position="584"/>
    </location>
</feature>
<feature type="repeat" description="PPR 6">
    <location>
        <begin position="806"/>
        <end position="849"/>
    </location>
</feature>
<feature type="repeat" description="PPR 7">
    <location>
        <begin position="852"/>
        <end position="886"/>
    </location>
</feature>
<feature type="repeat" description="PPR 8">
    <location>
        <begin position="887"/>
        <end position="924"/>
    </location>
</feature>
<feature type="repeat" description="PPR 9">
    <location>
        <begin position="925"/>
        <end position="959"/>
    </location>
</feature>
<feature type="repeat" description="PPR 10">
    <location>
        <begin position="960"/>
        <end position="995"/>
    </location>
</feature>
<feature type="repeat" description="PPR 11">
    <location>
        <begin position="996"/>
        <end position="1031"/>
    </location>
</feature>
<feature type="repeat" description="PPR 12">
    <location>
        <begin position="1032"/>
        <end position="1068"/>
    </location>
</feature>
<feature type="repeat" description="PPR 13">
    <location>
        <begin position="1109"/>
        <end position="1143"/>
    </location>
</feature>
<feature type="repeat" description="PPR 14">
    <location>
        <begin position="1144"/>
        <end position="1179"/>
    </location>
</feature>
<feature type="repeat" description="PPR 15">
    <location>
        <begin position="1180"/>
        <end position="1214"/>
    </location>
</feature>
<feature type="region of interest" description="Disordered" evidence="2">
    <location>
        <begin position="1225"/>
        <end position="1261"/>
    </location>
</feature>
<feature type="compositionally biased region" description="Polar residues" evidence="2">
    <location>
        <begin position="1237"/>
        <end position="1261"/>
    </location>
</feature>
<sequence length="1261" mass="141950">MVYTKAWFLQNIARQTLGKNVAVHRPPLKLGNMTNWIQQQQAQTNLSLSNTKAPGSLDERLFLTEDDIIFHDRSIQLGYFDPSLSERKQSPPGKSLHRFVDNLNPNSSHFSASLLPASLSSLCDSTCGDVDDEQQFNSLATSPLSTETQSEVSDPLLDTLTPNSLESSFASISLNSFTSANEFIQFLKRLASSKLSIHTFDLYKLVRNSPELLTLEAYNIVLQCMSTDDYFLSSSKNIQKIIKVYVDMLNSFISPNVTTFETVIFALCRRAKFVHQKIESLSKRTIYAHPSIAKEIQPELLDLQSEMPLQTAVFMFTSSLINHDLIYSPQFYAILIESVSLYGTQSQLDSLLECVPLGTIEANGHPDLLPALIRALGRAKRLNSCFQLLERYNLSDPTSDTSMTNVRSWEGLMEAYFDTDHHVEASALMKSFFRKADSNQVIPSSILDCFLRRLAQLGHYKESAEWLGMAIEKISTYKASPSTLSSILEAACLNNNDKFAIAFVRKYTLSRFSDCHAVLLRYLDLLARSGNVDLLHLHAYPVICSVSSHTNFTFSNVYKAFIENGKIDVALRLLRKHIDPKVSLGNNTAPSSNSVALQLSILNGFWEVLTEELQKDVHVLLSLVSTLENQVNFPQVDFTTPLLRHITGYLVSRRLEPELISPRVFGFLLEYAAFNVVQTEGTFTSKVILTDLLKCYSNGTYKASFKNVHVVLRSFTYLKEDEMLVASVRDDIVSEAVVGFSTDNNGQKILADISQVCYCLDDLECIDQSINSLVSKMLTSASPEQVDVNILFFQFGKLIETNKFLHPEVYPTLISVLSKNKRFDAVQRVFEHSKHLYRKISTKSLEKANWFMALILDAMILSSSFARQFKSSNLFCDNMKMLGYIPRASTFAHLINNSTRRGDTDDATTALNIFEETKRHNVKPSVFLYNAVLSKLGRARRTTECWKLFQEMKESGLLPTSVTYGTVINAACRIGDESLAEKLFAEMENQPNYQPRVAPYNTMIQFEVQTMFNREKALFYYNRLCATDIEPSSHTYKLLMDAYGTLKPVNVGSVKAVLELMERTDVPILSMHYAAYIHILGNVVSDVQAATSCYMNALAKHDAGEIQLDANLFQSQIESLIANDRIVEGIQIVSDMKRYNVSLNAYIVNALIKGFTKVGMISKARYYFDLLECEGMSGKEPSTYENMVRAYLSVNDGRKAMEIVEQLKRKRYPLPVVNRISSLVNSHMGQKPKRRSLNTSHSSLASLGNASTQHSINSSIN</sequence>